<evidence type="ECO:0000250" key="1"/>
<evidence type="ECO:0000250" key="2">
    <source>
        <dbReference type="UniProtKB" id="P56636"/>
    </source>
</evidence>
<evidence type="ECO:0000255" key="3"/>
<evidence type="ECO:0000269" key="4">
    <source>
    </source>
</evidence>
<evidence type="ECO:0000269" key="5">
    <source>
    </source>
</evidence>
<evidence type="ECO:0000303" key="6">
    <source>
    </source>
</evidence>
<evidence type="ECO:0000305" key="7"/>
<evidence type="ECO:0000305" key="8">
    <source>
    </source>
</evidence>
<sequence>MGMRMMFTVFLLVVLATTVVSFTSDRASDGRKAAAKDKASDLVALTVKGCCSHPACSVNNPDICG</sequence>
<name>CA11_CONMR</name>
<reference key="1">
    <citation type="journal article" date="2007" name="Toxicon">
        <title>From the identification of gene organization of alpha conotoxins to the cloning of novel toxins.</title>
        <authorList>
            <person name="Yuan D.-D."/>
            <person name="Han Y.-H."/>
            <person name="Wang C.-G."/>
            <person name="Chi C.-W."/>
        </authorList>
    </citation>
    <scope>NUCLEOTIDE SEQUENCE [GENOMIC DNA / MRNA]</scope>
</reference>
<reference key="2">
    <citation type="journal article" date="2010" name="Acta Biochim. Biophys. Sin.">
        <title>Chemical synthesis and characterization of two alpha4/7-conotoxins.</title>
        <authorList>
            <person name="Peng C."/>
            <person name="Chen W."/>
            <person name="Sanders T."/>
            <person name="Chew G."/>
            <person name="Liu J."/>
            <person name="Hawrot E."/>
            <person name="Chi C."/>
        </authorList>
    </citation>
    <scope>FUNCTION</scope>
    <scope>SYNTHESIS OF 49-64</scope>
    <scope>BIOASSAY</scope>
</reference>
<reference key="3">
    <citation type="journal article" date="2022" name="J. Med. Chem.">
        <title>Mechanism of action and structure-activity relationship of alpha-conotoxin Mr1.1 at the human alpha9alpha10 nicotinic acetylcholine receptor.</title>
        <authorList>
            <person name="Liang J."/>
            <person name="Tae H.S."/>
            <person name="Zhao Z."/>
            <person name="Li X."/>
            <person name="Zhang J."/>
            <person name="Chen S."/>
            <person name="Jiang T."/>
            <person name="Adams D.J."/>
            <person name="Yu R."/>
        </authorList>
    </citation>
    <scope>FUNCTION</scope>
    <scope>3D-STRUCTURE MODELING IN COMPLEX WITH HUMAN ALPHA-9-ALPHA-10 NACHR</scope>
    <scope>MUTAGENESIS OF SER-52; HIS-53; SER-57; VAL-58; ASN-59; ASN-60; PRO-61; ASP-62; ILE-63 AND CYS-64</scope>
    <scope>BIOTECHNOLOGY</scope>
</reference>
<feature type="signal peptide" evidence="3">
    <location>
        <begin position="1"/>
        <end position="21"/>
    </location>
</feature>
<feature type="propeptide" id="PRO_0000247847" evidence="1">
    <location>
        <begin position="22"/>
        <end position="48"/>
    </location>
</feature>
<feature type="peptide" id="PRO_0000247848" description="Alpha-conotoxin Mr1.1">
    <location>
        <begin position="49"/>
        <end position="64"/>
    </location>
</feature>
<feature type="region of interest" description="Ser-Xaa-Pro motif, crucial for potent interaction with nAChR" evidence="2">
    <location>
        <begin position="52"/>
        <end position="54"/>
    </location>
</feature>
<feature type="modified residue" description="Cysteine amide" evidence="1">
    <location>
        <position position="64"/>
    </location>
</feature>
<feature type="disulfide bond" evidence="2">
    <location>
        <begin position="50"/>
        <end position="56"/>
    </location>
</feature>
<feature type="disulfide bond" evidence="2">
    <location>
        <begin position="51"/>
        <end position="64"/>
    </location>
</feature>
<feature type="mutagenesis site" description="Increase in inhibitory activity towards human alpha-9-alpha-10 nAChR." evidence="5">
    <original>S</original>
    <variation>R</variation>
    <location>
        <position position="52"/>
    </location>
</feature>
<feature type="mutagenesis site" description="Decrease in inhibitory activity towards human alpha-9-alpha-10 nAChR." evidence="5">
    <original>S</original>
    <variation>T</variation>
    <location>
        <position position="52"/>
    </location>
</feature>
<feature type="mutagenesis site" description="Decrease in inhibitory activity towards human alpha-9-alpha-10 nAChR." evidence="5">
    <original>H</original>
    <variation>A</variation>
    <variation>R</variation>
    <variation>W</variation>
    <location>
        <position position="53"/>
    </location>
</feature>
<feature type="mutagenesis site" description="No change in inhibitory activity towards human alpha-9-alpha-10 nAChR." evidence="5">
    <original>S</original>
    <variation>A</variation>
    <variation>G</variation>
    <location>
        <position position="57"/>
    </location>
</feature>
<feature type="mutagenesis site" description="Decrease in inhibitory activity towards human alpha-9-alpha-10 nAChR." evidence="5">
    <original>S</original>
    <variation>N</variation>
    <variation>D</variation>
    <variation>K</variation>
    <variation>L</variation>
    <variation>R</variation>
    <variation>T</variation>
    <variation>V</variation>
    <variation>Y</variation>
    <location>
        <position position="57"/>
    </location>
</feature>
<feature type="mutagenesis site" description="Decrease in inhibitory activity towards human alpha-9-alpha-10 nAChR." evidence="5">
    <original>V</original>
    <variation>A</variation>
    <variation>D</variation>
    <variation>K</variation>
    <variation>L</variation>
    <variation>R</variation>
    <variation>Y</variation>
    <location>
        <position position="58"/>
    </location>
</feature>
<feature type="mutagenesis site" description="Decrease in inhibitory activity towards human alpha-9-alpha-10 nAChR." evidence="5">
    <original>N</original>
    <variation>A</variation>
    <variation>Q</variation>
    <location>
        <position position="59"/>
    </location>
</feature>
<feature type="mutagenesis site" description="Decrease in inhibitory activity towards human alpha-9-alpha-10 nAChR." evidence="5">
    <original>N</original>
    <variation>A</variation>
    <variation>H</variation>
    <location>
        <position position="60"/>
    </location>
</feature>
<feature type="mutagenesis site" description="Decrease in inhibitory activity towards human alpha-9-alpha-10 nAChR." evidence="5">
    <original>P</original>
    <variation>A</variation>
    <location>
        <position position="61"/>
    </location>
</feature>
<feature type="mutagenesis site" description="Decrease in inhibitory activity towards human alpha-9-alpha-10 nAChR." evidence="5">
    <original>D</original>
    <variation>A</variation>
    <variation>E</variation>
    <variation>S</variation>
    <location>
        <position position="62"/>
    </location>
</feature>
<feature type="mutagenesis site" description="Increase in inhibitory activity towards human alpha-9-alpha-10 nAChR." evidence="5">
    <original>I</original>
    <variation>L</variation>
    <location>
        <position position="63"/>
    </location>
</feature>
<feature type="mutagenesis site" description="Decrease in inhibitory activity towards human alpha-9-alpha-10 nAChR." evidence="5">
    <original>C</original>
    <variation>CL</variation>
    <variation>CY</variation>
    <location>
        <position position="64"/>
    </location>
</feature>
<feature type="mutagenesis site" description="Increase in inhibitory activity towards human alpha-9-alpha-10 nAChR." evidence="5">
    <original>C</original>
    <variation>CR</variation>
    <location>
        <position position="64"/>
    </location>
</feature>
<feature type="sequence conflict" description="In Ref. 1; ABD33869." evidence="7" ref="1">
    <original>K</original>
    <variation>N</variation>
    <location>
        <position position="32"/>
    </location>
</feature>
<organism>
    <name type="scientific">Conus marmoreus</name>
    <name type="common">Marble cone</name>
    <dbReference type="NCBI Taxonomy" id="42752"/>
    <lineage>
        <taxon>Eukaryota</taxon>
        <taxon>Metazoa</taxon>
        <taxon>Spiralia</taxon>
        <taxon>Lophotrochozoa</taxon>
        <taxon>Mollusca</taxon>
        <taxon>Gastropoda</taxon>
        <taxon>Caenogastropoda</taxon>
        <taxon>Neogastropoda</taxon>
        <taxon>Conoidea</taxon>
        <taxon>Conidae</taxon>
        <taxon>Conus</taxon>
    </lineage>
</organism>
<proteinExistence type="evidence at protein level"/>
<dbReference type="EMBL" id="AY580325">
    <property type="protein sequence ID" value="AAS93428.1"/>
    <property type="molecule type" value="mRNA"/>
</dbReference>
<dbReference type="EMBL" id="DQ311077">
    <property type="protein sequence ID" value="ABD33869.1"/>
    <property type="molecule type" value="Genomic_DNA"/>
</dbReference>
<dbReference type="ConoServer" id="123">
    <property type="toxin name" value="Mr1.1 precursor"/>
</dbReference>
<dbReference type="GO" id="GO:0005576">
    <property type="term" value="C:extracellular region"/>
    <property type="evidence" value="ECO:0007669"/>
    <property type="project" value="UniProtKB-SubCell"/>
</dbReference>
<dbReference type="GO" id="GO:0035792">
    <property type="term" value="C:host cell postsynaptic membrane"/>
    <property type="evidence" value="ECO:0007669"/>
    <property type="project" value="UniProtKB-KW"/>
</dbReference>
<dbReference type="GO" id="GO:0030550">
    <property type="term" value="F:acetylcholine receptor inhibitor activity"/>
    <property type="evidence" value="ECO:0007669"/>
    <property type="project" value="UniProtKB-KW"/>
</dbReference>
<dbReference type="GO" id="GO:0099106">
    <property type="term" value="F:ion channel regulator activity"/>
    <property type="evidence" value="ECO:0007669"/>
    <property type="project" value="UniProtKB-KW"/>
</dbReference>
<dbReference type="GO" id="GO:0090729">
    <property type="term" value="F:toxin activity"/>
    <property type="evidence" value="ECO:0007669"/>
    <property type="project" value="UniProtKB-KW"/>
</dbReference>
<dbReference type="InterPro" id="IPR009958">
    <property type="entry name" value="Conotoxin_a-typ"/>
</dbReference>
<dbReference type="Pfam" id="PF07365">
    <property type="entry name" value="Toxin_8"/>
    <property type="match status" value="1"/>
</dbReference>
<keyword id="KW-0008">Acetylcholine receptor inhibiting toxin</keyword>
<keyword id="KW-0027">Amidation</keyword>
<keyword id="KW-1015">Disulfide bond</keyword>
<keyword id="KW-0872">Ion channel impairing toxin</keyword>
<keyword id="KW-0528">Neurotoxin</keyword>
<keyword id="KW-0629">Postsynaptic neurotoxin</keyword>
<keyword id="KW-0964">Secreted</keyword>
<keyword id="KW-0732">Signal</keyword>
<keyword id="KW-0800">Toxin</keyword>
<protein>
    <recommendedName>
        <fullName evidence="6">Alpha-conotoxin Mr1.1</fullName>
    </recommendedName>
</protein>
<accession>Q6PTD1</accession>
<accession>A1X8D7</accession>
<comment type="function">
    <text evidence="4 5">Alpha-conotoxins act on postsynaptic membranes, they bind to the nicotinic acetylcholine receptors (nAChR) and thus inhibit them (PubMed:20801929, PubMed:36137181). This toxin potently and reversibly inhibits alpha-9-alpha-10/CHRNA9-CHRNA10 (IC(50)=92 nM (human) and IC(50)=8.3 nM (rat)) and human alpha3-beta-2/CHRNA3-CHRNB2 nAChR (IC(50)=218.9 nM) (PubMed:36137181). Also moderately inhibits human alpha-3-beta-4/CHRNA3-CHRNB4 (60% inhibition at 1 uM), rat alpha-7/CHRNA7 (65% inhibition at 1 uM) and rat alpha-3-beta-2/CHRNA3-CHRNB2 nAChR (50-70% inhibition at 10 uM) (PubMed:20801929, PubMed:36137181). In two rat pain models, this toxin shows analgesic effect (PubMed:20801929, PubMed:36137181).</text>
</comment>
<comment type="subcellular location">
    <subcellularLocation>
        <location evidence="8">Secreted</location>
    </subcellularLocation>
</comment>
<comment type="tissue specificity">
    <text evidence="8">Expressed by the venom duct.</text>
</comment>
<comment type="domain">
    <text evidence="7">The cysteine framework is I (CC-C-C). Alpha4/7 pattern.</text>
</comment>
<comment type="biotechnology">
    <text evidence="5">The S52Dap (S4Dap) analog has potential as a candidate for drug development candidate to treat neuropathic pain. This S52Dap analog (in which Dap stands for L-2,3-diaminopropionic acid) improves inhibitory activity at human alpha-9-alpha-10 nAChR by more than 20-fold. It is also much more selective for human alpha-9-alpha-10 than the native peptide (a9a10 (IC(50)=4.0 nM) &gt; a3a2 (IC(50)=20.6 nM) &gt; a7 (IC(50)=259.1 nM)). In addition, in a rat neuropathic pain model, it shows potent analgesic activity, superior to that of the native peptide.</text>
</comment>
<comment type="miscellaneous">
    <text evidence="4 5">Negative results: does not or very weakly inhibit mouse muscle alpha-1-beta-1-gamma-delta/CHRNA1-CHRNB1-CHRNG-CHRND nAChRs (PubMed:20801929). Does not or very weakly inhibit rat neuronal alpha-6/alpha-3-beta-4 (CHRNA6/CHRNA3-CHRNB4), alpha-3-beta-4/CHRNA3-CHRNB4, alpha-4-beta-2/CHRNA4-CHRNB2 and alpha-4-beta-4/CHRNA4-CHRNB4 nAChRs (PubMed:20801929). Does not or weakly inhibit human alpha-1-beta-1-delta-epsilon/CHRNA1-CHRNB1-CHRND-CHRNE, alpha-4-beta-2/CHRNA4-CHRNB2, and alpha-7/CHRNA7 nAChRs (PubMed:36137181).</text>
</comment>
<comment type="similarity">
    <text evidence="7">Belongs to the conotoxin A superfamily.</text>
</comment>